<evidence type="ECO:0000255" key="1"/>
<evidence type="ECO:0000255" key="2">
    <source>
        <dbReference type="PROSITE-ProRule" id="PRU00041"/>
    </source>
</evidence>
<evidence type="ECO:0000269" key="3">
    <source>
    </source>
</evidence>
<evidence type="ECO:0000303" key="4">
    <source>
    </source>
</evidence>
<evidence type="ECO:0000305" key="5"/>
<evidence type="ECO:0000312" key="6">
    <source>
        <dbReference type="EMBL" id="BAD35565.1"/>
    </source>
</evidence>
<evidence type="ECO:0000312" key="7">
    <source>
        <dbReference type="EMBL" id="BAD35910.1"/>
    </source>
</evidence>
<evidence type="ECO:0000312" key="8">
    <source>
        <dbReference type="EMBL" id="BAF19989.1"/>
    </source>
</evidence>
<evidence type="ECO:0000312" key="9">
    <source>
        <dbReference type="EMBL" id="EAZ37635.1"/>
    </source>
</evidence>
<accession>Q69T22</accession>
<accession>A0A0P0WYT4</accession>
<accession>A3BDJ6</accession>
<feature type="chain" id="PRO_0000445339" description="FT-interacting protein 1">
    <location>
        <begin position="1"/>
        <end position="824"/>
    </location>
</feature>
<feature type="transmembrane region" description="Helical" evidence="1">
    <location>
        <begin position="625"/>
        <end position="645"/>
    </location>
</feature>
<feature type="transmembrane region" description="Helical" evidence="1">
    <location>
        <begin position="657"/>
        <end position="677"/>
    </location>
</feature>
<feature type="transmembrane region" description="Helical" evidence="1">
    <location>
        <begin position="764"/>
        <end position="784"/>
    </location>
</feature>
<feature type="domain" description="C2 1" evidence="2">
    <location>
        <begin position="48"/>
        <end position="170"/>
    </location>
</feature>
<feature type="domain" description="C2 2" evidence="2">
    <location>
        <begin position="217"/>
        <end position="341"/>
    </location>
</feature>
<feature type="domain" description="C2 3" evidence="2">
    <location>
        <begin position="385"/>
        <end position="522"/>
    </location>
</feature>
<name>FTIP1_ORYSJ</name>
<organism>
    <name type="scientific">Oryza sativa subsp. japonica</name>
    <name type="common">Rice</name>
    <dbReference type="NCBI Taxonomy" id="39947"/>
    <lineage>
        <taxon>Eukaryota</taxon>
        <taxon>Viridiplantae</taxon>
        <taxon>Streptophyta</taxon>
        <taxon>Embryophyta</taxon>
        <taxon>Tracheophyta</taxon>
        <taxon>Spermatophyta</taxon>
        <taxon>Magnoliopsida</taxon>
        <taxon>Liliopsida</taxon>
        <taxon>Poales</taxon>
        <taxon>Poaceae</taxon>
        <taxon>BOP clade</taxon>
        <taxon>Oryzoideae</taxon>
        <taxon>Oryzeae</taxon>
        <taxon>Oryzinae</taxon>
        <taxon>Oryza</taxon>
        <taxon>Oryza sativa</taxon>
    </lineage>
</organism>
<sequence>MTMTGGHHHDAHHEDFQLKDTNPLLGEQWPKGAAGPARPAVGGGIAGWLGLEKPSSTYDLVEQMFFLYVRVVKAKDLPPNPITGSPMDPYVEVKLGNYKGTTKHYDRRANPEWDQVFAFSKSRVQSNVLEVYLKDKEMLGRDDYVGRVVFDLAEVPTRVPPDSPLAPQWYRLEERRVGGGGDGGGLKVRGELMLAVWIGTQADEAFPEAWHSDAATVRGEGVASVRSKAYVSPKLWYLRVNVIEAQDVQPQARGRAPEVFVKAQVGNQILKTSVVAAPTLNPRWNEDLVFVVAEPFEEQLLLTVEDRVTPRKDDLLGRAALPLALFEKRLDHRPFVQSRWFDLEKFGIGGAIEGETRRELRFASRVHVRACLEGAYHVMDESTMYISDTRPTARQLWKPPVGVLEVGILGAAGLQPMKNRDGRGTTDAYCVAKYGQKWVRTRTMLGTFSPTWNEQYTWEVFDPCTVITIGVFDNNHLGNGNGNGNNAGGGGGGSPPARDARVGKIRIRLSTLETDRVYTHAYPLIVLQPSGVKKMGELRLAVRFTCLSLMNMVHLYTQPLLPRMHYLHPFTVTQLDALRYQAMGIVAARLGRAEPPLRREVVEYMLDVESHMWSMRRSKANFFRAVSLFSGAAAAARWFADVCHWKNVATTALVHVLLLILVWYPELILPTVFLYMFMIGLWNYRRRPRHPPHMDTKMSWAEAVHPDELDEEFDTFPTSRQQDVVYMRYDRLRSVAGRIQTVVGDMATQGERLQSLLGWRDPRATCLFVVFCLVAAVVLYVTPFRVVALVAGLYLLRHPRFRSRLPAVPSNFFRRLPSRADSML</sequence>
<proteinExistence type="evidence at protein level"/>
<reference key="1">
    <citation type="journal article" date="2005" name="Nature">
        <title>The map-based sequence of the rice genome.</title>
        <authorList>
            <consortium name="International rice genome sequencing project (IRGSP)"/>
        </authorList>
    </citation>
    <scope>NUCLEOTIDE SEQUENCE [LARGE SCALE GENOMIC DNA]</scope>
    <source>
        <strain>cv. Nipponbare</strain>
    </source>
</reference>
<reference key="2">
    <citation type="journal article" date="2008" name="Nucleic Acids Res.">
        <title>The rice annotation project database (RAP-DB): 2008 update.</title>
        <authorList>
            <consortium name="The rice annotation project (RAP)"/>
        </authorList>
    </citation>
    <scope>GENOME REANNOTATION</scope>
    <source>
        <strain>cv. Nipponbare</strain>
    </source>
</reference>
<reference key="3">
    <citation type="journal article" date="2013" name="Rice">
        <title>Improvement of the Oryza sativa Nipponbare reference genome using next generation sequence and optical map data.</title>
        <authorList>
            <person name="Kawahara Y."/>
            <person name="de la Bastide M."/>
            <person name="Hamilton J.P."/>
            <person name="Kanamori H."/>
            <person name="McCombie W.R."/>
            <person name="Ouyang S."/>
            <person name="Schwartz D.C."/>
            <person name="Tanaka T."/>
            <person name="Wu J."/>
            <person name="Zhou S."/>
            <person name="Childs K.L."/>
            <person name="Davidson R.M."/>
            <person name="Lin H."/>
            <person name="Quesada-Ocampo L."/>
            <person name="Vaillancourt B."/>
            <person name="Sakai H."/>
            <person name="Lee S.S."/>
            <person name="Kim J."/>
            <person name="Numa H."/>
            <person name="Itoh T."/>
            <person name="Buell C.R."/>
            <person name="Matsumoto T."/>
        </authorList>
    </citation>
    <scope>GENOME REANNOTATION</scope>
    <source>
        <strain>cv. Nipponbare</strain>
    </source>
</reference>
<reference key="4">
    <citation type="journal article" date="2005" name="PLoS Biol.">
        <title>The genomes of Oryza sativa: a history of duplications.</title>
        <authorList>
            <person name="Yu J."/>
            <person name="Wang J."/>
            <person name="Lin W."/>
            <person name="Li S."/>
            <person name="Li H."/>
            <person name="Zhou J."/>
            <person name="Ni P."/>
            <person name="Dong W."/>
            <person name="Hu S."/>
            <person name="Zeng C."/>
            <person name="Zhang J."/>
            <person name="Zhang Y."/>
            <person name="Li R."/>
            <person name="Xu Z."/>
            <person name="Li S."/>
            <person name="Li X."/>
            <person name="Zheng H."/>
            <person name="Cong L."/>
            <person name="Lin L."/>
            <person name="Yin J."/>
            <person name="Geng J."/>
            <person name="Li G."/>
            <person name="Shi J."/>
            <person name="Liu J."/>
            <person name="Lv H."/>
            <person name="Li J."/>
            <person name="Wang J."/>
            <person name="Deng Y."/>
            <person name="Ran L."/>
            <person name="Shi X."/>
            <person name="Wang X."/>
            <person name="Wu Q."/>
            <person name="Li C."/>
            <person name="Ren X."/>
            <person name="Wang J."/>
            <person name="Wang X."/>
            <person name="Li D."/>
            <person name="Liu D."/>
            <person name="Zhang X."/>
            <person name="Ji Z."/>
            <person name="Zhao W."/>
            <person name="Sun Y."/>
            <person name="Zhang Z."/>
            <person name="Bao J."/>
            <person name="Han Y."/>
            <person name="Dong L."/>
            <person name="Ji J."/>
            <person name="Chen P."/>
            <person name="Wu S."/>
            <person name="Liu J."/>
            <person name="Xiao Y."/>
            <person name="Bu D."/>
            <person name="Tan J."/>
            <person name="Yang L."/>
            <person name="Ye C."/>
            <person name="Zhang J."/>
            <person name="Xu J."/>
            <person name="Zhou Y."/>
            <person name="Yu Y."/>
            <person name="Zhang B."/>
            <person name="Zhuang S."/>
            <person name="Wei H."/>
            <person name="Liu B."/>
            <person name="Lei M."/>
            <person name="Yu H."/>
            <person name="Li Y."/>
            <person name="Xu H."/>
            <person name="Wei S."/>
            <person name="He X."/>
            <person name="Fang L."/>
            <person name="Zhang Z."/>
            <person name="Zhang Y."/>
            <person name="Huang X."/>
            <person name="Su Z."/>
            <person name="Tong W."/>
            <person name="Li J."/>
            <person name="Tong Z."/>
            <person name="Li S."/>
            <person name="Ye J."/>
            <person name="Wang L."/>
            <person name="Fang L."/>
            <person name="Lei T."/>
            <person name="Chen C.-S."/>
            <person name="Chen H.-C."/>
            <person name="Xu Z."/>
            <person name="Li H."/>
            <person name="Huang H."/>
            <person name="Zhang F."/>
            <person name="Xu H."/>
            <person name="Li N."/>
            <person name="Zhao C."/>
            <person name="Li S."/>
            <person name="Dong L."/>
            <person name="Huang Y."/>
            <person name="Li L."/>
            <person name="Xi Y."/>
            <person name="Qi Q."/>
            <person name="Li W."/>
            <person name="Zhang B."/>
            <person name="Hu W."/>
            <person name="Zhang Y."/>
            <person name="Tian X."/>
            <person name="Jiao Y."/>
            <person name="Liang X."/>
            <person name="Jin J."/>
            <person name="Gao L."/>
            <person name="Zheng W."/>
            <person name="Hao B."/>
            <person name="Liu S.-M."/>
            <person name="Wang W."/>
            <person name="Yuan L."/>
            <person name="Cao M."/>
            <person name="McDermott J."/>
            <person name="Samudrala R."/>
            <person name="Wang J."/>
            <person name="Wong G.K.-S."/>
            <person name="Yang H."/>
        </authorList>
    </citation>
    <scope>NUCLEOTIDE SEQUENCE [LARGE SCALE GENOMIC DNA]</scope>
    <source>
        <strain>cv. Nipponbare</strain>
    </source>
</reference>
<reference key="5">
    <citation type="journal article" date="2017" name="Plant Cell">
        <title>OsFTIP1-mediated regulation of florigen transport in rice is negatively regulated by the ubiquitin-like domain kinase OsUbDKgamma4.</title>
        <authorList>
            <person name="Song S."/>
            <person name="Chen Y."/>
            <person name="Liu L."/>
            <person name="Wang Y."/>
            <person name="Bao S."/>
            <person name="Zhou X."/>
            <person name="Teo Z.W."/>
            <person name="Mao C."/>
            <person name="Gan Y."/>
            <person name="Yu H."/>
        </authorList>
    </citation>
    <scope>FUNCTION</scope>
    <scope>INTERACTION WITH RFT1 AND PI4KG4</scope>
    <scope>TISSUE SPECIFICITY</scope>
    <scope>DISRUPTION PHENOTYPE</scope>
</reference>
<keyword id="KW-0256">Endoplasmic reticulum</keyword>
<keyword id="KW-0287">Flowering</keyword>
<keyword id="KW-0472">Membrane</keyword>
<keyword id="KW-1185">Reference proteome</keyword>
<keyword id="KW-0677">Repeat</keyword>
<keyword id="KW-0812">Transmembrane</keyword>
<keyword id="KW-1133">Transmembrane helix</keyword>
<dbReference type="EMBL" id="AP003711">
    <property type="protein sequence ID" value="BAD35565.1"/>
    <property type="status" value="ALT_INIT"/>
    <property type="molecule type" value="Genomic_DNA"/>
</dbReference>
<dbReference type="EMBL" id="AP004781">
    <property type="protein sequence ID" value="BAD35910.1"/>
    <property type="status" value="ALT_INIT"/>
    <property type="molecule type" value="Genomic_DNA"/>
</dbReference>
<dbReference type="EMBL" id="AP008212">
    <property type="protein sequence ID" value="BAF19989.1"/>
    <property type="status" value="ALT_INIT"/>
    <property type="molecule type" value="Genomic_DNA"/>
</dbReference>
<dbReference type="EMBL" id="AP014962">
    <property type="protein sequence ID" value="BAS98619.1"/>
    <property type="status" value="ALT_INIT"/>
    <property type="molecule type" value="Genomic_DNA"/>
</dbReference>
<dbReference type="EMBL" id="CM000143">
    <property type="protein sequence ID" value="EAZ37635.1"/>
    <property type="molecule type" value="Genomic_DNA"/>
</dbReference>
<dbReference type="RefSeq" id="XP_015641342.1">
    <property type="nucleotide sequence ID" value="XM_015785856.1"/>
</dbReference>
<dbReference type="RefSeq" id="XP_015641343.1">
    <property type="nucleotide sequence ID" value="XM_015785857.1"/>
</dbReference>
<dbReference type="SMR" id="Q69T22"/>
<dbReference type="FunCoup" id="Q69T22">
    <property type="interactions" value="992"/>
</dbReference>
<dbReference type="STRING" id="39947.Q69T22"/>
<dbReference type="PaxDb" id="39947-Q69T22"/>
<dbReference type="EnsemblPlants" id="Os06t0614000-01">
    <property type="protein sequence ID" value="Os06t0614000-01"/>
    <property type="gene ID" value="Os06g0614000"/>
</dbReference>
<dbReference type="Gramene" id="Os06t0614000-01">
    <property type="protein sequence ID" value="Os06t0614000-01"/>
    <property type="gene ID" value="Os06g0614000"/>
</dbReference>
<dbReference type="KEGG" id="dosa:Os06g0614000"/>
<dbReference type="eggNOG" id="ENOG502QR9H">
    <property type="taxonomic scope" value="Eukaryota"/>
</dbReference>
<dbReference type="HOGENOM" id="CLU_003762_4_0_1"/>
<dbReference type="InParanoid" id="Q69T22"/>
<dbReference type="OrthoDB" id="67700at2759"/>
<dbReference type="Proteomes" id="UP000000763">
    <property type="component" value="Chromosome 6"/>
</dbReference>
<dbReference type="Proteomes" id="UP000007752">
    <property type="component" value="Chromosome 6"/>
</dbReference>
<dbReference type="Proteomes" id="UP000059680">
    <property type="component" value="Chromosome 6"/>
</dbReference>
<dbReference type="GO" id="GO:0005789">
    <property type="term" value="C:endoplasmic reticulum membrane"/>
    <property type="evidence" value="ECO:0000314"/>
    <property type="project" value="UniProtKB"/>
</dbReference>
<dbReference type="GO" id="GO:0009511">
    <property type="term" value="C:plasmodesmatal endoplasmic reticulum"/>
    <property type="evidence" value="ECO:0007669"/>
    <property type="project" value="EnsemblPlants"/>
</dbReference>
<dbReference type="GO" id="GO:0009908">
    <property type="term" value="P:flower development"/>
    <property type="evidence" value="ECO:0007669"/>
    <property type="project" value="UniProtKB-KW"/>
</dbReference>
<dbReference type="GO" id="GO:0048574">
    <property type="term" value="P:long-day photoperiodism, flowering"/>
    <property type="evidence" value="ECO:0007669"/>
    <property type="project" value="EnsemblPlants"/>
</dbReference>
<dbReference type="GO" id="GO:0009911">
    <property type="term" value="P:positive regulation of flower development"/>
    <property type="evidence" value="ECO:0007669"/>
    <property type="project" value="EnsemblPlants"/>
</dbReference>
<dbReference type="GO" id="GO:0048578">
    <property type="term" value="P:positive regulation of long-day photoperiodism, flowering"/>
    <property type="evidence" value="ECO:0000315"/>
    <property type="project" value="UniProtKB"/>
</dbReference>
<dbReference type="CDD" id="cd08378">
    <property type="entry name" value="C2B_MCTP_PRT_plant"/>
    <property type="match status" value="1"/>
</dbReference>
<dbReference type="CDD" id="cd04019">
    <property type="entry name" value="C2C_MCTP_PRT_plant"/>
    <property type="match status" value="1"/>
</dbReference>
<dbReference type="CDD" id="cd08379">
    <property type="entry name" value="C2D_MCTP_PRT_plant"/>
    <property type="match status" value="1"/>
</dbReference>
<dbReference type="FunFam" id="2.60.40.150:FF:000090">
    <property type="entry name" value="C2 domain-containing protein"/>
    <property type="match status" value="1"/>
</dbReference>
<dbReference type="FunFam" id="2.60.40.150:FF:000119">
    <property type="entry name" value="C2 domain-containing protein"/>
    <property type="match status" value="1"/>
</dbReference>
<dbReference type="FunFam" id="2.60.40.150:FF:000128">
    <property type="entry name" value="C2 domain-containing protein"/>
    <property type="match status" value="1"/>
</dbReference>
<dbReference type="Gene3D" id="2.60.40.150">
    <property type="entry name" value="C2 domain"/>
    <property type="match status" value="3"/>
</dbReference>
<dbReference type="InterPro" id="IPR000008">
    <property type="entry name" value="C2_dom"/>
</dbReference>
<dbReference type="InterPro" id="IPR035892">
    <property type="entry name" value="C2_domain_sf"/>
</dbReference>
<dbReference type="InterPro" id="IPR047257">
    <property type="entry name" value="C2B_MCTP_PRT_plant"/>
</dbReference>
<dbReference type="InterPro" id="IPR047258">
    <property type="entry name" value="C2C_MCTP_PRT_plant"/>
</dbReference>
<dbReference type="InterPro" id="IPR047255">
    <property type="entry name" value="C2D_MCTP_PRT_plant"/>
</dbReference>
<dbReference type="InterPro" id="IPR013583">
    <property type="entry name" value="MCTP_C"/>
</dbReference>
<dbReference type="InterPro" id="IPR047259">
    <property type="entry name" value="QUIRKY-like"/>
</dbReference>
<dbReference type="PANTHER" id="PTHR31425:SF24">
    <property type="entry name" value="MULTIPLE C2 DOMAIN AND TRANSMEMBRANE REGION PROTEIN 2"/>
    <property type="match status" value="1"/>
</dbReference>
<dbReference type="PANTHER" id="PTHR31425">
    <property type="entry name" value="PHOSPHORIBOSYLANTHRANILATE TRANSFERASE ISOFORM 1"/>
    <property type="match status" value="1"/>
</dbReference>
<dbReference type="Pfam" id="PF00168">
    <property type="entry name" value="C2"/>
    <property type="match status" value="3"/>
</dbReference>
<dbReference type="Pfam" id="PF08372">
    <property type="entry name" value="PRT_C"/>
    <property type="match status" value="1"/>
</dbReference>
<dbReference type="SMART" id="SM00239">
    <property type="entry name" value="C2"/>
    <property type="match status" value="3"/>
</dbReference>
<dbReference type="SUPFAM" id="SSF49562">
    <property type="entry name" value="C2 domain (Calcium/lipid-binding domain, CaLB)"/>
    <property type="match status" value="3"/>
</dbReference>
<dbReference type="PROSITE" id="PS50004">
    <property type="entry name" value="C2"/>
    <property type="match status" value="3"/>
</dbReference>
<gene>
    <name evidence="4" type="primary">FTIP1</name>
    <name evidence="8" type="ordered locus">Os06g0614000</name>
    <name evidence="5" type="ordered locus">LOC_Os06g41090</name>
    <name evidence="9" type="ORF">OsJ_21968</name>
    <name evidence="6" type="ORF">P0417G12.28</name>
    <name evidence="7" type="ORF">P0691E09.4</name>
</gene>
<protein>
    <recommendedName>
        <fullName evidence="4">FT-interacting protein 1</fullName>
        <shortName evidence="4">OsFTIP1</shortName>
    </recommendedName>
</protein>
<comment type="function">
    <text evidence="3">Involved in the export of the long day-specific flower-promoting signal (florigen) RFT1 from the phloem companion cells to sieve elements (PubMed:28254780). Promotes flowering under long days through the transport of RFT1 from the leaves to the shoot apical meristem (SAM) (PubMed:28254780).</text>
</comment>
<comment type="subunit">
    <text evidence="3">Interacts with RFT1 and PI4KG4.</text>
</comment>
<comment type="subcellular location">
    <subcellularLocation>
        <location evidence="3">Endoplasmic reticulum membrane</location>
        <topology evidence="1">Multi-pass membrane protein</topology>
    </subcellularLocation>
</comment>
<comment type="tissue specificity">
    <text evidence="3">Specifically expressed in the phloem including companion cells.</text>
</comment>
<comment type="disruption phenotype">
    <text evidence="3">Delayed flowering phenotype under long day conditions.</text>
</comment>
<comment type="similarity">
    <text evidence="5">Belongs to the MCTP family.</text>
</comment>
<comment type="sequence caution" evidence="5">
    <conflict type="erroneous initiation">
        <sequence resource="EMBL-CDS" id="BAD35565"/>
    </conflict>
    <text>Truncated N-terminus.</text>
</comment>
<comment type="sequence caution" evidence="5">
    <conflict type="erroneous initiation">
        <sequence resource="EMBL-CDS" id="BAD35910"/>
    </conflict>
    <text>Truncated N-terminus.</text>
</comment>
<comment type="sequence caution" evidence="5">
    <conflict type="erroneous initiation">
        <sequence resource="EMBL-CDS" id="BAF19989"/>
    </conflict>
    <text>Truncated N-terminus.</text>
</comment>
<comment type="sequence caution" evidence="5">
    <conflict type="erroneous initiation">
        <sequence resource="EMBL-CDS" id="BAS98619"/>
    </conflict>
    <text>Truncated N-terminus.</text>
</comment>